<protein>
    <recommendedName>
        <fullName evidence="1">Sulfite reductase [NADPH] hemoprotein beta-component</fullName>
        <shortName evidence="1">SiR-HP</shortName>
        <shortName evidence="1">SiRHP</shortName>
        <ecNumber evidence="1">1.8.1.2</ecNumber>
    </recommendedName>
</protein>
<evidence type="ECO:0000255" key="1">
    <source>
        <dbReference type="HAMAP-Rule" id="MF_01540"/>
    </source>
</evidence>
<sequence length="570" mass="63988">MSEKHPGPLVVEGKLTDAERMKLESNYLRGTIAEDLNDGLTGGFKGDNFLLIRFHGMYQQDDRDIRAERAEQKLEPRHAMLLRCRLPGGVITTKQWQAIDKFAGENTIYGSIRLTNRQTFQFHGILKKNVKPVHQMLHSVGLDALATANDMNRNVLCTSNPYESQLHAEAYEWAKKISEHLLPRTRAYAEIWLDQEKVATTDEEPILGQTYLPRKFKTTVVIPPQNDIDLHANDMNFVAIAENGKLVGFNLLVGGGLSIEHGNKKTYARTASEFGYLPLEHTLAVAEAVVTTQRDWGNRTDRKNAKTKYTLERVGVETFKAEVERRAGIKFEPIRPYEFTGRGDRIGWVKGIDDNWHLTLFIENGRILDYPGRPLKTGLLEIAKIHKGDFRITANQNLIIAGVPESEKAKIEKIAKESGLMNAVTPQRENSMACVSFPTCPLAMAEAERFLPSFIDNIDNLMAKHGVSDEHIVMRVTGCPNGCGRAMLAEVGLVGKAPGRYNLHLGGNRIGTRIPRMYKENITEPEILASLDELIGRWAKEREVGEGFGDFTVRAGIIRPVLDPARDLWD</sequence>
<accession>B7MKN0</accession>
<feature type="chain" id="PRO_1000146643" description="Sulfite reductase [NADPH] hemoprotein beta-component">
    <location>
        <begin position="1"/>
        <end position="570"/>
    </location>
</feature>
<feature type="binding site" evidence="1">
    <location>
        <position position="434"/>
    </location>
    <ligand>
        <name>[4Fe-4S] cluster</name>
        <dbReference type="ChEBI" id="CHEBI:49883"/>
    </ligand>
</feature>
<feature type="binding site" evidence="1">
    <location>
        <position position="440"/>
    </location>
    <ligand>
        <name>[4Fe-4S] cluster</name>
        <dbReference type="ChEBI" id="CHEBI:49883"/>
    </ligand>
</feature>
<feature type="binding site" evidence="1">
    <location>
        <position position="479"/>
    </location>
    <ligand>
        <name>[4Fe-4S] cluster</name>
        <dbReference type="ChEBI" id="CHEBI:49883"/>
    </ligand>
</feature>
<feature type="binding site" evidence="1">
    <location>
        <position position="483"/>
    </location>
    <ligand>
        <name>[4Fe-4S] cluster</name>
        <dbReference type="ChEBI" id="CHEBI:49883"/>
    </ligand>
</feature>
<feature type="binding site" description="axial binding residue" evidence="1">
    <location>
        <position position="483"/>
    </location>
    <ligand>
        <name>siroheme</name>
        <dbReference type="ChEBI" id="CHEBI:60052"/>
    </ligand>
    <ligandPart>
        <name>Fe</name>
        <dbReference type="ChEBI" id="CHEBI:18248"/>
    </ligandPart>
</feature>
<proteinExistence type="inferred from homology"/>
<organism>
    <name type="scientific">Escherichia coli O45:K1 (strain S88 / ExPEC)</name>
    <dbReference type="NCBI Taxonomy" id="585035"/>
    <lineage>
        <taxon>Bacteria</taxon>
        <taxon>Pseudomonadati</taxon>
        <taxon>Pseudomonadota</taxon>
        <taxon>Gammaproteobacteria</taxon>
        <taxon>Enterobacterales</taxon>
        <taxon>Enterobacteriaceae</taxon>
        <taxon>Escherichia</taxon>
    </lineage>
</organism>
<comment type="function">
    <text evidence="1">Component of the sulfite reductase complex that catalyzes the 6-electron reduction of sulfite to sulfide. This is one of several activities required for the biosynthesis of L-cysteine from sulfate.</text>
</comment>
<comment type="catalytic activity">
    <reaction evidence="1">
        <text>hydrogen sulfide + 3 NADP(+) + 3 H2O = sulfite + 3 NADPH + 4 H(+)</text>
        <dbReference type="Rhea" id="RHEA:13801"/>
        <dbReference type="ChEBI" id="CHEBI:15377"/>
        <dbReference type="ChEBI" id="CHEBI:15378"/>
        <dbReference type="ChEBI" id="CHEBI:17359"/>
        <dbReference type="ChEBI" id="CHEBI:29919"/>
        <dbReference type="ChEBI" id="CHEBI:57783"/>
        <dbReference type="ChEBI" id="CHEBI:58349"/>
        <dbReference type="EC" id="1.8.1.2"/>
    </reaction>
</comment>
<comment type="cofactor">
    <cofactor evidence="1">
        <name>siroheme</name>
        <dbReference type="ChEBI" id="CHEBI:60052"/>
    </cofactor>
    <text evidence="1">Binds 1 siroheme per subunit.</text>
</comment>
<comment type="cofactor">
    <cofactor evidence="1">
        <name>[4Fe-4S] cluster</name>
        <dbReference type="ChEBI" id="CHEBI:49883"/>
    </cofactor>
    <text evidence="1">Binds 1 [4Fe-4S] cluster per subunit.</text>
</comment>
<comment type="pathway">
    <text evidence="1">Sulfur metabolism; hydrogen sulfide biosynthesis; hydrogen sulfide from sulfite (NADPH route): step 1/1.</text>
</comment>
<comment type="subunit">
    <text evidence="1">Alpha(8)-beta(8). The alpha component is a flavoprotein, the beta component is a hemoprotein.</text>
</comment>
<comment type="similarity">
    <text evidence="1">Belongs to the nitrite and sulfite reductase 4Fe-4S domain family.</text>
</comment>
<reference key="1">
    <citation type="journal article" date="2009" name="PLoS Genet.">
        <title>Organised genome dynamics in the Escherichia coli species results in highly diverse adaptive paths.</title>
        <authorList>
            <person name="Touchon M."/>
            <person name="Hoede C."/>
            <person name="Tenaillon O."/>
            <person name="Barbe V."/>
            <person name="Baeriswyl S."/>
            <person name="Bidet P."/>
            <person name="Bingen E."/>
            <person name="Bonacorsi S."/>
            <person name="Bouchier C."/>
            <person name="Bouvet O."/>
            <person name="Calteau A."/>
            <person name="Chiapello H."/>
            <person name="Clermont O."/>
            <person name="Cruveiller S."/>
            <person name="Danchin A."/>
            <person name="Diard M."/>
            <person name="Dossat C."/>
            <person name="Karoui M.E."/>
            <person name="Frapy E."/>
            <person name="Garry L."/>
            <person name="Ghigo J.M."/>
            <person name="Gilles A.M."/>
            <person name="Johnson J."/>
            <person name="Le Bouguenec C."/>
            <person name="Lescat M."/>
            <person name="Mangenot S."/>
            <person name="Martinez-Jehanne V."/>
            <person name="Matic I."/>
            <person name="Nassif X."/>
            <person name="Oztas S."/>
            <person name="Petit M.A."/>
            <person name="Pichon C."/>
            <person name="Rouy Z."/>
            <person name="Ruf C.S."/>
            <person name="Schneider D."/>
            <person name="Tourret J."/>
            <person name="Vacherie B."/>
            <person name="Vallenet D."/>
            <person name="Medigue C."/>
            <person name="Rocha E.P.C."/>
            <person name="Denamur E."/>
        </authorList>
    </citation>
    <scope>NUCLEOTIDE SEQUENCE [LARGE SCALE GENOMIC DNA]</scope>
    <source>
        <strain>S88 / ExPEC</strain>
    </source>
</reference>
<keyword id="KW-0004">4Fe-4S</keyword>
<keyword id="KW-0028">Amino-acid biosynthesis</keyword>
<keyword id="KW-0198">Cysteine biosynthesis</keyword>
<keyword id="KW-0349">Heme</keyword>
<keyword id="KW-0408">Iron</keyword>
<keyword id="KW-0411">Iron-sulfur</keyword>
<keyword id="KW-0479">Metal-binding</keyword>
<keyword id="KW-0521">NADP</keyword>
<keyword id="KW-0560">Oxidoreductase</keyword>
<keyword id="KW-1185">Reference proteome</keyword>
<dbReference type="EC" id="1.8.1.2" evidence="1"/>
<dbReference type="EMBL" id="CU928161">
    <property type="protein sequence ID" value="CAR04271.1"/>
    <property type="molecule type" value="Genomic_DNA"/>
</dbReference>
<dbReference type="RefSeq" id="WP_001290708.1">
    <property type="nucleotide sequence ID" value="NC_011742.1"/>
</dbReference>
<dbReference type="SMR" id="B7MKN0"/>
<dbReference type="KEGG" id="ecz:ECS88_3027"/>
<dbReference type="HOGENOM" id="CLU_001975_3_2_6"/>
<dbReference type="UniPathway" id="UPA00140">
    <property type="reaction ID" value="UER00207"/>
</dbReference>
<dbReference type="Proteomes" id="UP000000747">
    <property type="component" value="Chromosome"/>
</dbReference>
<dbReference type="GO" id="GO:0009337">
    <property type="term" value="C:sulfite reductase complex (NADPH)"/>
    <property type="evidence" value="ECO:0007669"/>
    <property type="project" value="InterPro"/>
</dbReference>
<dbReference type="GO" id="GO:0051539">
    <property type="term" value="F:4 iron, 4 sulfur cluster binding"/>
    <property type="evidence" value="ECO:0007669"/>
    <property type="project" value="UniProtKB-KW"/>
</dbReference>
<dbReference type="GO" id="GO:0020037">
    <property type="term" value="F:heme binding"/>
    <property type="evidence" value="ECO:0007669"/>
    <property type="project" value="InterPro"/>
</dbReference>
<dbReference type="GO" id="GO:0046872">
    <property type="term" value="F:metal ion binding"/>
    <property type="evidence" value="ECO:0007669"/>
    <property type="project" value="UniProtKB-KW"/>
</dbReference>
<dbReference type="GO" id="GO:0050661">
    <property type="term" value="F:NADP binding"/>
    <property type="evidence" value="ECO:0007669"/>
    <property type="project" value="InterPro"/>
</dbReference>
<dbReference type="GO" id="GO:0050311">
    <property type="term" value="F:sulfite reductase (ferredoxin) activity"/>
    <property type="evidence" value="ECO:0007669"/>
    <property type="project" value="TreeGrafter"/>
</dbReference>
<dbReference type="GO" id="GO:0004783">
    <property type="term" value="F:sulfite reductase (NADPH) activity"/>
    <property type="evidence" value="ECO:0007669"/>
    <property type="project" value="UniProtKB-UniRule"/>
</dbReference>
<dbReference type="GO" id="GO:0019344">
    <property type="term" value="P:cysteine biosynthetic process"/>
    <property type="evidence" value="ECO:0007669"/>
    <property type="project" value="UniProtKB-KW"/>
</dbReference>
<dbReference type="GO" id="GO:0070814">
    <property type="term" value="P:hydrogen sulfide biosynthetic process"/>
    <property type="evidence" value="ECO:0007669"/>
    <property type="project" value="UniProtKB-UniRule"/>
</dbReference>
<dbReference type="GO" id="GO:0000103">
    <property type="term" value="P:sulfate assimilation"/>
    <property type="evidence" value="ECO:0007669"/>
    <property type="project" value="UniProtKB-UniRule"/>
</dbReference>
<dbReference type="FunFam" id="3.30.413.10:FF:000003">
    <property type="entry name" value="Sulfite reductase [NADPH] hemoprotein beta-component"/>
    <property type="match status" value="1"/>
</dbReference>
<dbReference type="FunFam" id="3.30.413.10:FF:000004">
    <property type="entry name" value="Sulfite reductase [NADPH] hemoprotein beta-component"/>
    <property type="match status" value="1"/>
</dbReference>
<dbReference type="Gene3D" id="3.30.413.10">
    <property type="entry name" value="Sulfite Reductase Hemoprotein, domain 1"/>
    <property type="match status" value="2"/>
</dbReference>
<dbReference type="HAMAP" id="MF_01540">
    <property type="entry name" value="CysI"/>
    <property type="match status" value="1"/>
</dbReference>
<dbReference type="InterPro" id="IPR011786">
    <property type="entry name" value="CysI"/>
</dbReference>
<dbReference type="InterPro" id="IPR005117">
    <property type="entry name" value="NiRdtase/SiRdtase_haem-b_fer"/>
</dbReference>
<dbReference type="InterPro" id="IPR036136">
    <property type="entry name" value="Nit/Sulf_reduc_fer-like_dom_sf"/>
</dbReference>
<dbReference type="InterPro" id="IPR006067">
    <property type="entry name" value="NO2/SO3_Rdtase_4Fe4S_dom"/>
</dbReference>
<dbReference type="InterPro" id="IPR045169">
    <property type="entry name" value="NO2/SO3_Rdtase_4Fe4S_prot"/>
</dbReference>
<dbReference type="InterPro" id="IPR045854">
    <property type="entry name" value="NO2/SO3_Rdtase_4Fe4S_sf"/>
</dbReference>
<dbReference type="InterPro" id="IPR006066">
    <property type="entry name" value="NO2/SO3_Rdtase_FeS/sirohaem_BS"/>
</dbReference>
<dbReference type="NCBIfam" id="TIGR02041">
    <property type="entry name" value="CysI"/>
    <property type="match status" value="1"/>
</dbReference>
<dbReference type="NCBIfam" id="NF010029">
    <property type="entry name" value="PRK13504.1"/>
    <property type="match status" value="1"/>
</dbReference>
<dbReference type="PANTHER" id="PTHR11493:SF47">
    <property type="entry name" value="SULFITE REDUCTASE [NADPH] SUBUNIT BETA"/>
    <property type="match status" value="1"/>
</dbReference>
<dbReference type="PANTHER" id="PTHR11493">
    <property type="entry name" value="SULFITE REDUCTASE [NADPH] SUBUNIT BETA-RELATED"/>
    <property type="match status" value="1"/>
</dbReference>
<dbReference type="Pfam" id="PF01077">
    <property type="entry name" value="NIR_SIR"/>
    <property type="match status" value="1"/>
</dbReference>
<dbReference type="Pfam" id="PF03460">
    <property type="entry name" value="NIR_SIR_ferr"/>
    <property type="match status" value="2"/>
</dbReference>
<dbReference type="PRINTS" id="PR00397">
    <property type="entry name" value="SIROHAEM"/>
</dbReference>
<dbReference type="SUPFAM" id="SSF56014">
    <property type="entry name" value="Nitrite and sulphite reductase 4Fe-4S domain-like"/>
    <property type="match status" value="2"/>
</dbReference>
<dbReference type="SUPFAM" id="SSF55124">
    <property type="entry name" value="Nitrite/Sulfite reductase N-terminal domain-like"/>
    <property type="match status" value="2"/>
</dbReference>
<dbReference type="PROSITE" id="PS00365">
    <property type="entry name" value="NIR_SIR"/>
    <property type="match status" value="1"/>
</dbReference>
<name>CYSI_ECO45</name>
<gene>
    <name evidence="1" type="primary">cysI</name>
    <name type="ordered locus">ECS88_3027</name>
</gene>